<sequence>MSDEVVLLDTWASMYGMRARIALAEKGVRYEYKEENLMNRSPLLLQMNPIHKKIPVLIHNGKPICESAIIVQYIDEVWNDKSPLMPSDPYKRSQARFWVDYIDKKIYDTWKKMWLSKGEEHEEGKKELISIFKQLEETLTDKPFYGDDTFGFVDLCLITFSSWFYTYETYGNFKMEEECPKLMAWVKRCMERETVSNTLPDAKKVYGLIVELQKTLESK</sequence>
<name>GSTX3_SOYBN</name>
<dbReference type="EC" id="2.5.1.18"/>
<dbReference type="EMBL" id="X68819">
    <property type="protein sequence ID" value="CAA48717.1"/>
    <property type="molecule type" value="mRNA"/>
</dbReference>
<dbReference type="PIR" id="S47177">
    <property type="entry name" value="S47177"/>
</dbReference>
<dbReference type="RefSeq" id="NP_001236181.1">
    <property type="nucleotide sequence ID" value="NM_001249252.3"/>
</dbReference>
<dbReference type="SMR" id="P46417"/>
<dbReference type="STRING" id="3847.P46417"/>
<dbReference type="PaxDb" id="3847-GLYMA15G40290.1"/>
<dbReference type="EnsemblPlants" id="KRH13625">
    <property type="protein sequence ID" value="KRH13625"/>
    <property type="gene ID" value="GLYMA_15G252200"/>
</dbReference>
<dbReference type="GeneID" id="547925"/>
<dbReference type="Gramene" id="KRH13625">
    <property type="protein sequence ID" value="KRH13625"/>
    <property type="gene ID" value="GLYMA_15G252200"/>
</dbReference>
<dbReference type="KEGG" id="gmx:547925"/>
<dbReference type="eggNOG" id="KOG0406">
    <property type="taxonomic scope" value="Eukaryota"/>
</dbReference>
<dbReference type="HOGENOM" id="CLU_011226_18_2_1"/>
<dbReference type="InParanoid" id="P46417"/>
<dbReference type="OMA" id="LITSYNW"/>
<dbReference type="OrthoDB" id="202840at2759"/>
<dbReference type="Proteomes" id="UP000008827">
    <property type="component" value="Chromosome 15"/>
</dbReference>
<dbReference type="GO" id="GO:0005737">
    <property type="term" value="C:cytoplasm"/>
    <property type="evidence" value="ECO:0000318"/>
    <property type="project" value="GO_Central"/>
</dbReference>
<dbReference type="GO" id="GO:0004364">
    <property type="term" value="F:glutathione transferase activity"/>
    <property type="evidence" value="ECO:0000318"/>
    <property type="project" value="GO_Central"/>
</dbReference>
<dbReference type="GO" id="GO:0006749">
    <property type="term" value="P:glutathione metabolic process"/>
    <property type="evidence" value="ECO:0000318"/>
    <property type="project" value="GO_Central"/>
</dbReference>
<dbReference type="CDD" id="cd03185">
    <property type="entry name" value="GST_C_Tau"/>
    <property type="match status" value="1"/>
</dbReference>
<dbReference type="CDD" id="cd03058">
    <property type="entry name" value="GST_N_Tau"/>
    <property type="match status" value="1"/>
</dbReference>
<dbReference type="FunFam" id="1.20.1050.10:FF:000018">
    <property type="entry name" value="Glutathione S-transferase U20"/>
    <property type="match status" value="1"/>
</dbReference>
<dbReference type="FunFam" id="3.40.30.10:FF:000014">
    <property type="entry name" value="Tau class glutathione S-transferase"/>
    <property type="match status" value="1"/>
</dbReference>
<dbReference type="Gene3D" id="1.20.1050.10">
    <property type="match status" value="1"/>
</dbReference>
<dbReference type="Gene3D" id="3.40.30.10">
    <property type="entry name" value="Glutaredoxin"/>
    <property type="match status" value="1"/>
</dbReference>
<dbReference type="InterPro" id="IPR010987">
    <property type="entry name" value="Glutathione-S-Trfase_C-like"/>
</dbReference>
<dbReference type="InterPro" id="IPR036282">
    <property type="entry name" value="Glutathione-S-Trfase_C_sf"/>
</dbReference>
<dbReference type="InterPro" id="IPR040079">
    <property type="entry name" value="Glutathione_S-Trfase"/>
</dbReference>
<dbReference type="InterPro" id="IPR004045">
    <property type="entry name" value="Glutathione_S-Trfase_N"/>
</dbReference>
<dbReference type="InterPro" id="IPR004046">
    <property type="entry name" value="GST_C"/>
</dbReference>
<dbReference type="InterPro" id="IPR045074">
    <property type="entry name" value="GST_C_Tau"/>
</dbReference>
<dbReference type="InterPro" id="IPR045073">
    <property type="entry name" value="Omega/Tau-like"/>
</dbReference>
<dbReference type="InterPro" id="IPR036249">
    <property type="entry name" value="Thioredoxin-like_sf"/>
</dbReference>
<dbReference type="PANTHER" id="PTHR11260:SF773">
    <property type="entry name" value="GLUTATHIONE S-TRANSFERASE U26"/>
    <property type="match status" value="1"/>
</dbReference>
<dbReference type="PANTHER" id="PTHR11260">
    <property type="entry name" value="GLUTATHIONE S-TRANSFERASE, GST, SUPERFAMILY, GST DOMAIN CONTAINING"/>
    <property type="match status" value="1"/>
</dbReference>
<dbReference type="Pfam" id="PF00043">
    <property type="entry name" value="GST_C"/>
    <property type="match status" value="1"/>
</dbReference>
<dbReference type="Pfam" id="PF02798">
    <property type="entry name" value="GST_N"/>
    <property type="match status" value="1"/>
</dbReference>
<dbReference type="SFLD" id="SFLDS00019">
    <property type="entry name" value="Glutathione_Transferase_(cytos"/>
    <property type="match status" value="1"/>
</dbReference>
<dbReference type="SFLD" id="SFLDG01152">
    <property type="entry name" value="Main.3:_Omega-_and_Tau-like"/>
    <property type="match status" value="1"/>
</dbReference>
<dbReference type="SUPFAM" id="SSF47616">
    <property type="entry name" value="GST C-terminal domain-like"/>
    <property type="match status" value="1"/>
</dbReference>
<dbReference type="SUPFAM" id="SSF52833">
    <property type="entry name" value="Thioredoxin-like"/>
    <property type="match status" value="1"/>
</dbReference>
<dbReference type="PROSITE" id="PS50405">
    <property type="entry name" value="GST_CTER"/>
    <property type="match status" value="1"/>
</dbReference>
<dbReference type="PROSITE" id="PS50404">
    <property type="entry name" value="GST_NTER"/>
    <property type="match status" value="1"/>
</dbReference>
<reference key="1">
    <citation type="submission" date="1992-09" db="EMBL/GenBank/DDBJ databases">
        <authorList>
            <person name="Koellner B."/>
            <person name="Finkelnburg B."/>
            <person name="Mayerbacher R."/>
            <person name="Paulus C."/>
            <person name="Springer B."/>
        </authorList>
    </citation>
    <scope>NUCLEOTIDE SEQUENCE [MRNA]</scope>
    <source>
        <tissue>Leaf</tissue>
    </source>
</reference>
<reference key="2">
    <citation type="journal article" date="2000" name="Arch. Biochem. Biophys.">
        <title>Cloning and characterization of glyoxalase I from soybean.</title>
        <authorList>
            <person name="Skipsey M."/>
            <person name="Andrews C.J."/>
            <person name="Townson J.K."/>
            <person name="Jepson I."/>
            <person name="Edwards R."/>
        </authorList>
    </citation>
    <scope>CATALYTIC ACTIVITY</scope>
    <scope>SUBUNIT</scope>
</reference>
<accession>P46417</accession>
<keyword id="KW-1185">Reference proteome</keyword>
<keyword id="KW-0808">Transferase</keyword>
<feature type="chain" id="PRO_0000185873" description="Glutathione S-transferase 3">
    <location>
        <begin position="1"/>
        <end position="219"/>
    </location>
</feature>
<feature type="domain" description="GST N-terminal">
    <location>
        <begin position="3"/>
        <end position="82"/>
    </location>
</feature>
<feature type="domain" description="GST C-terminal">
    <location>
        <begin position="88"/>
        <end position="216"/>
    </location>
</feature>
<feature type="binding site" evidence="1">
    <location>
        <position position="13"/>
    </location>
    <ligand>
        <name>glutathione</name>
        <dbReference type="ChEBI" id="CHEBI:57925"/>
    </ligand>
</feature>
<feature type="binding site" evidence="1">
    <location>
        <position position="54"/>
    </location>
    <ligand>
        <name>glutathione</name>
        <dbReference type="ChEBI" id="CHEBI:57925"/>
    </ligand>
</feature>
<feature type="binding site" evidence="1">
    <location>
        <begin position="66"/>
        <end position="67"/>
    </location>
    <ligand>
        <name>glutathione</name>
        <dbReference type="ChEBI" id="CHEBI:57925"/>
    </ligand>
</feature>
<evidence type="ECO:0000250" key="1"/>
<evidence type="ECO:0000269" key="2">
    <source>
    </source>
</evidence>
<evidence type="ECO:0000305" key="3"/>
<protein>
    <recommendedName>
        <fullName>Glutathione S-transferase 3</fullName>
        <ecNumber>2.5.1.18</ecNumber>
    </recommendedName>
</protein>
<comment type="function">
    <text>Conjugation of reduced glutathione to a wide number of exogenous and endogenous hydrophobic electrophiles. Involved in the detoxification of certain herbicides.</text>
</comment>
<comment type="catalytic activity">
    <reaction evidence="2">
        <text>RX + glutathione = an S-substituted glutathione + a halide anion + H(+)</text>
        <dbReference type="Rhea" id="RHEA:16437"/>
        <dbReference type="ChEBI" id="CHEBI:15378"/>
        <dbReference type="ChEBI" id="CHEBI:16042"/>
        <dbReference type="ChEBI" id="CHEBI:17792"/>
        <dbReference type="ChEBI" id="CHEBI:57925"/>
        <dbReference type="ChEBI" id="CHEBI:90779"/>
        <dbReference type="EC" id="2.5.1.18"/>
    </reaction>
</comment>
<comment type="subunit">
    <text evidence="2">Homodimer. degradation; (R)-lactate from methylglyoxal: step 1/2.</text>
</comment>
<comment type="similarity">
    <text evidence="3">Belongs to the GST superfamily. HSP26 family.</text>
</comment>
<comment type="caution">
    <text evidence="3">Was originally (Ref.1) thought to be a glyoxalase I.</text>
</comment>
<organism>
    <name type="scientific">Glycine max</name>
    <name type="common">Soybean</name>
    <name type="synonym">Glycine hispida</name>
    <dbReference type="NCBI Taxonomy" id="3847"/>
    <lineage>
        <taxon>Eukaryota</taxon>
        <taxon>Viridiplantae</taxon>
        <taxon>Streptophyta</taxon>
        <taxon>Embryophyta</taxon>
        <taxon>Tracheophyta</taxon>
        <taxon>Spermatophyta</taxon>
        <taxon>Magnoliopsida</taxon>
        <taxon>eudicotyledons</taxon>
        <taxon>Gunneridae</taxon>
        <taxon>Pentapetalae</taxon>
        <taxon>rosids</taxon>
        <taxon>fabids</taxon>
        <taxon>Fabales</taxon>
        <taxon>Fabaceae</taxon>
        <taxon>Papilionoideae</taxon>
        <taxon>50 kb inversion clade</taxon>
        <taxon>NPAAA clade</taxon>
        <taxon>indigoferoid/millettioid clade</taxon>
        <taxon>Phaseoleae</taxon>
        <taxon>Glycine</taxon>
        <taxon>Glycine subgen. Soja</taxon>
    </lineage>
</organism>
<gene>
    <name type="primary">GST3</name>
</gene>
<proteinExistence type="evidence at protein level"/>